<proteinExistence type="evidence at protein level"/>
<reference key="1">
    <citation type="journal article" date="2005" name="Nature">
        <title>DNA sequence and analysis of human chromosome 18.</title>
        <authorList>
            <person name="Nusbaum C."/>
            <person name="Zody M.C."/>
            <person name="Borowsky M.L."/>
            <person name="Kamal M."/>
            <person name="Kodira C.D."/>
            <person name="Taylor T.D."/>
            <person name="Whittaker C.A."/>
            <person name="Chang J.L."/>
            <person name="Cuomo C.A."/>
            <person name="Dewar K."/>
            <person name="FitzGerald M.G."/>
            <person name="Yang X."/>
            <person name="Abouelleil A."/>
            <person name="Allen N.R."/>
            <person name="Anderson S."/>
            <person name="Bloom T."/>
            <person name="Bugalter B."/>
            <person name="Butler J."/>
            <person name="Cook A."/>
            <person name="DeCaprio D."/>
            <person name="Engels R."/>
            <person name="Garber M."/>
            <person name="Gnirke A."/>
            <person name="Hafez N."/>
            <person name="Hall J.L."/>
            <person name="Norman C.H."/>
            <person name="Itoh T."/>
            <person name="Jaffe D.B."/>
            <person name="Kuroki Y."/>
            <person name="Lehoczky J."/>
            <person name="Lui A."/>
            <person name="Macdonald P."/>
            <person name="Mauceli E."/>
            <person name="Mikkelsen T.S."/>
            <person name="Naylor J.W."/>
            <person name="Nicol R."/>
            <person name="Nguyen C."/>
            <person name="Noguchi H."/>
            <person name="O'Leary S.B."/>
            <person name="Piqani B."/>
            <person name="Smith C.L."/>
            <person name="Talamas J.A."/>
            <person name="Topham K."/>
            <person name="Totoki Y."/>
            <person name="Toyoda A."/>
            <person name="Wain H.M."/>
            <person name="Young S.K."/>
            <person name="Zeng Q."/>
            <person name="Zimmer A.R."/>
            <person name="Fujiyama A."/>
            <person name="Hattori M."/>
            <person name="Birren B.W."/>
            <person name="Sakaki Y."/>
            <person name="Lander E.S."/>
        </authorList>
    </citation>
    <scope>NUCLEOTIDE SEQUENCE [LARGE SCALE GENOMIC DNA]</scope>
</reference>
<reference key="2">
    <citation type="submission" date="2005-07" db="EMBL/GenBank/DDBJ databases">
        <authorList>
            <person name="Mural R.J."/>
            <person name="Istrail S."/>
            <person name="Sutton G.G."/>
            <person name="Florea L."/>
            <person name="Halpern A.L."/>
            <person name="Mobarry C.M."/>
            <person name="Lippert R."/>
            <person name="Walenz B."/>
            <person name="Shatkay H."/>
            <person name="Dew I."/>
            <person name="Miller J.R."/>
            <person name="Flanigan M.J."/>
            <person name="Edwards N.J."/>
            <person name="Bolanos R."/>
            <person name="Fasulo D."/>
            <person name="Halldorsson B.V."/>
            <person name="Hannenhalli S."/>
            <person name="Turner R."/>
            <person name="Yooseph S."/>
            <person name="Lu F."/>
            <person name="Nusskern D.R."/>
            <person name="Shue B.C."/>
            <person name="Zheng X.H."/>
            <person name="Zhong F."/>
            <person name="Delcher A.L."/>
            <person name="Huson D.H."/>
            <person name="Kravitz S.A."/>
            <person name="Mouchard L."/>
            <person name="Reinert K."/>
            <person name="Remington K.A."/>
            <person name="Clark A.G."/>
            <person name="Waterman M.S."/>
            <person name="Eichler E.E."/>
            <person name="Adams M.D."/>
            <person name="Hunkapiller M.W."/>
            <person name="Myers E.W."/>
            <person name="Venter J.C."/>
        </authorList>
    </citation>
    <scope>NUCLEOTIDE SEQUENCE [LARGE SCALE GENOMIC DNA]</scope>
</reference>
<reference key="3">
    <citation type="journal article" date="2004" name="Genome Res.">
        <title>The status, quality, and expansion of the NIH full-length cDNA project: the Mammalian Gene Collection (MGC).</title>
        <authorList>
            <consortium name="The MGC Project Team"/>
        </authorList>
    </citation>
    <scope>NUCLEOTIDE SEQUENCE [LARGE SCALE MRNA]</scope>
    <source>
        <tissue>Brain</tissue>
    </source>
</reference>
<gene>
    <name type="primary">HSBP1L1</name>
</gene>
<organism>
    <name type="scientific">Homo sapiens</name>
    <name type="common">Human</name>
    <dbReference type="NCBI Taxonomy" id="9606"/>
    <lineage>
        <taxon>Eukaryota</taxon>
        <taxon>Metazoa</taxon>
        <taxon>Chordata</taxon>
        <taxon>Craniata</taxon>
        <taxon>Vertebrata</taxon>
        <taxon>Euteleostomi</taxon>
        <taxon>Mammalia</taxon>
        <taxon>Eutheria</taxon>
        <taxon>Euarchontoglires</taxon>
        <taxon>Primates</taxon>
        <taxon>Haplorrhini</taxon>
        <taxon>Catarrhini</taxon>
        <taxon>Hominidae</taxon>
        <taxon>Homo</taxon>
    </lineage>
</organism>
<feature type="chain" id="PRO_0000394662" description="Heat shock factor-binding protein 1-like protein 1">
    <location>
        <begin position="1"/>
        <end position="74"/>
    </location>
</feature>
<feature type="coiled-coil region" evidence="1">
    <location>
        <begin position="12"/>
        <end position="65"/>
    </location>
</feature>
<feature type="sequence conflict" description="In Ref. 3; AAI57849." evidence="2" ref="3">
    <original>K</original>
    <variation>N</variation>
    <location>
        <position position="55"/>
    </location>
</feature>
<comment type="interaction">
    <interactant intactId="EBI-2685549">
        <id>C9JCN9</id>
    </interactant>
    <interactant intactId="EBI-11522760">
        <id>Q6RW13-2</id>
        <label>AGTRAP</label>
    </interactant>
    <organismsDiffer>false</organismsDiffer>
    <experiments>3</experiments>
</comment>
<comment type="interaction">
    <interactant intactId="EBI-2685549">
        <id>C9JCN9</id>
    </interactant>
    <interactant intactId="EBI-3905054">
        <id>P13196</id>
        <label>ALAS1</label>
    </interactant>
    <organismsDiffer>false</organismsDiffer>
    <experiments>3</experiments>
</comment>
<comment type="interaction">
    <interactant intactId="EBI-2685549">
        <id>C9JCN9</id>
    </interactant>
    <interactant intactId="EBI-17278014">
        <id>Q8IZR5-2</id>
        <label>CMTM4</label>
    </interactant>
    <organismsDiffer>false</organismsDiffer>
    <experiments>3</experiments>
</comment>
<comment type="interaction">
    <interactant intactId="EBI-2685549">
        <id>C9JCN9</id>
    </interactant>
    <interactant intactId="EBI-3918971">
        <id>Q9Y680</id>
        <label>FKBP7</label>
    </interactant>
    <organismsDiffer>false</organismsDiffer>
    <experiments>3</experiments>
</comment>
<comment type="interaction">
    <interactant intactId="EBI-2685549">
        <id>C9JCN9</id>
    </interactant>
    <interactant intactId="EBI-6165891">
        <id>Q14696</id>
        <label>MESD</label>
    </interactant>
    <organismsDiffer>false</organismsDiffer>
    <experiments>3</experiments>
</comment>
<comment type="interaction">
    <interactant intactId="EBI-2685549">
        <id>C9JCN9</id>
    </interactant>
    <interactant intactId="EBI-10271199">
        <id>Q8NI38</id>
        <label>NFKBID</label>
    </interactant>
    <organismsDiffer>false</organismsDiffer>
    <experiments>3</experiments>
</comment>
<comment type="interaction">
    <interactant intactId="EBI-2685549">
        <id>C9JCN9</id>
    </interactant>
    <interactant intactId="EBI-10302990">
        <id>Q9BYU1</id>
        <label>PBX4</label>
    </interactant>
    <organismsDiffer>false</organismsDiffer>
    <experiments>3</experiments>
</comment>
<comment type="interaction">
    <interactant intactId="EBI-2685549">
        <id>C9JCN9</id>
    </interactant>
    <interactant intactId="EBI-608347">
        <id>Q04941</id>
        <label>PLP2</label>
    </interactant>
    <organismsDiffer>false</organismsDiffer>
    <experiments>3</experiments>
</comment>
<comment type="interaction">
    <interactant intactId="EBI-2685549">
        <id>C9JCN9</id>
    </interactant>
    <interactant intactId="EBI-11321949">
        <id>O43761</id>
        <label>SYNGR3</label>
    </interactant>
    <organismsDiffer>false</organismsDiffer>
    <experiments>3</experiments>
</comment>
<comment type="interaction">
    <interactant intactId="EBI-2685549">
        <id>C9JCN9</id>
    </interactant>
    <interactant intactId="EBI-1044859">
        <id>Q9UBN6</id>
        <label>TNFRSF10D</label>
    </interactant>
    <organismsDiffer>false</organismsDiffer>
    <experiments>3</experiments>
</comment>
<comment type="similarity">
    <text evidence="2">Belongs to the HSBP1 family.</text>
</comment>
<name>HSBPL_HUMAN</name>
<sequence length="74" mass="8384">MDVRGPEAPGGRALRDAAENLFQELQEHFQALTATLNLRMEEMGNRIEDLQKNVKDLMVQAGIENSIKEQMLKT</sequence>
<accession>C9JCN9</accession>
<accession>B2RXG9</accession>
<dbReference type="EMBL" id="AC090360">
    <property type="status" value="NOT_ANNOTATED_CDS"/>
    <property type="molecule type" value="Genomic_DNA"/>
</dbReference>
<dbReference type="EMBL" id="AC114341">
    <property type="status" value="NOT_ANNOTATED_CDS"/>
    <property type="molecule type" value="Genomic_DNA"/>
</dbReference>
<dbReference type="EMBL" id="CH471117">
    <property type="protein sequence ID" value="EAW66638.1"/>
    <property type="molecule type" value="Genomic_DNA"/>
</dbReference>
<dbReference type="EMBL" id="BC157848">
    <property type="protein sequence ID" value="AAI57849.1"/>
    <property type="molecule type" value="mRNA"/>
</dbReference>
<dbReference type="CCDS" id="CCDS45886.1"/>
<dbReference type="RefSeq" id="NP_001129652.1">
    <property type="nucleotide sequence ID" value="NM_001136180.2"/>
</dbReference>
<dbReference type="SMR" id="C9JCN9"/>
<dbReference type="BioGRID" id="136630">
    <property type="interactions" value="11"/>
</dbReference>
<dbReference type="FunCoup" id="C9JCN9">
    <property type="interactions" value="878"/>
</dbReference>
<dbReference type="IntAct" id="C9JCN9">
    <property type="interactions" value="11"/>
</dbReference>
<dbReference type="STRING" id="9606.ENSP00000414236"/>
<dbReference type="iPTMnet" id="C9JCN9"/>
<dbReference type="PhosphoSitePlus" id="C9JCN9"/>
<dbReference type="BioMuta" id="HSBP1L1"/>
<dbReference type="PaxDb" id="9606-ENSP00000414236"/>
<dbReference type="PeptideAtlas" id="C9JCN9"/>
<dbReference type="TopDownProteomics" id="C9JCN9"/>
<dbReference type="Antibodypedia" id="62785">
    <property type="antibodies" value="5 antibodies from 5 providers"/>
</dbReference>
<dbReference type="DNASU" id="440498"/>
<dbReference type="Ensembl" id="ENST00000451882.3">
    <property type="protein sequence ID" value="ENSP00000414236.1"/>
    <property type="gene ID" value="ENSG00000226742.4"/>
</dbReference>
<dbReference type="GeneID" id="440498"/>
<dbReference type="KEGG" id="hsa:440498"/>
<dbReference type="MANE-Select" id="ENST00000451882.3">
    <property type="protein sequence ID" value="ENSP00000414236.1"/>
    <property type="RefSeq nucleotide sequence ID" value="NM_001136180.2"/>
    <property type="RefSeq protein sequence ID" value="NP_001129652.1"/>
</dbReference>
<dbReference type="UCSC" id="uc002lno.5">
    <property type="organism name" value="human"/>
</dbReference>
<dbReference type="AGR" id="HGNC:37243"/>
<dbReference type="CTD" id="440498"/>
<dbReference type="DisGeNET" id="440498"/>
<dbReference type="GeneCards" id="HSBP1L1"/>
<dbReference type="HGNC" id="HGNC:37243">
    <property type="gene designation" value="HSBP1L1"/>
</dbReference>
<dbReference type="HPA" id="ENSG00000226742">
    <property type="expression patterns" value="Low tissue specificity"/>
</dbReference>
<dbReference type="neXtProt" id="NX_C9JCN9"/>
<dbReference type="OpenTargets" id="ENSG00000226742"/>
<dbReference type="PharmGKB" id="PA165429036"/>
<dbReference type="VEuPathDB" id="HostDB:ENSG00000226742"/>
<dbReference type="eggNOG" id="ENOG502SE6P">
    <property type="taxonomic scope" value="Eukaryota"/>
</dbReference>
<dbReference type="GeneTree" id="ENSGT00550000076117"/>
<dbReference type="HOGENOM" id="CLU_149552_4_0_1"/>
<dbReference type="InParanoid" id="C9JCN9"/>
<dbReference type="OMA" id="MEEMGHR"/>
<dbReference type="OrthoDB" id="4159489at2759"/>
<dbReference type="PAN-GO" id="C9JCN9">
    <property type="GO annotations" value="3 GO annotations based on evolutionary models"/>
</dbReference>
<dbReference type="PhylomeDB" id="C9JCN9"/>
<dbReference type="PathwayCommons" id="C9JCN9"/>
<dbReference type="SignaLink" id="C9JCN9"/>
<dbReference type="BioGRID-ORCS" id="440498">
    <property type="hits" value="13 hits in 1073 CRISPR screens"/>
</dbReference>
<dbReference type="GenomeRNAi" id="440498"/>
<dbReference type="Pharos" id="C9JCN9">
    <property type="development level" value="Tdark"/>
</dbReference>
<dbReference type="PRO" id="PR:C9JCN9"/>
<dbReference type="Proteomes" id="UP000005640">
    <property type="component" value="Chromosome 18"/>
</dbReference>
<dbReference type="RNAct" id="C9JCN9">
    <property type="molecule type" value="protein"/>
</dbReference>
<dbReference type="Bgee" id="ENSG00000226742">
    <property type="expression patterns" value="Expressed in lower esophagus mucosa and 140 other cell types or tissues"/>
</dbReference>
<dbReference type="ExpressionAtlas" id="C9JCN9">
    <property type="expression patterns" value="baseline and differential"/>
</dbReference>
<dbReference type="GO" id="GO:0005829">
    <property type="term" value="C:cytosol"/>
    <property type="evidence" value="ECO:0000318"/>
    <property type="project" value="GO_Central"/>
</dbReference>
<dbReference type="GO" id="GO:0005634">
    <property type="term" value="C:nucleus"/>
    <property type="evidence" value="ECO:0000318"/>
    <property type="project" value="GO_Central"/>
</dbReference>
<dbReference type="GO" id="GO:0003714">
    <property type="term" value="F:transcription corepressor activity"/>
    <property type="evidence" value="ECO:0007669"/>
    <property type="project" value="InterPro"/>
</dbReference>
<dbReference type="GO" id="GO:0070370">
    <property type="term" value="P:cellular heat acclimation"/>
    <property type="evidence" value="ECO:0000318"/>
    <property type="project" value="GO_Central"/>
</dbReference>
<dbReference type="FunFam" id="1.20.5.430:FF:000004">
    <property type="entry name" value="heat shock factor-binding protein 1-like protein 1"/>
    <property type="match status" value="1"/>
</dbReference>
<dbReference type="Gene3D" id="1.20.5.430">
    <property type="match status" value="1"/>
</dbReference>
<dbReference type="InterPro" id="IPR009643">
    <property type="entry name" value="HS1-bd"/>
</dbReference>
<dbReference type="PANTHER" id="PTHR19424">
    <property type="entry name" value="HEAT SHOCK FACTOR BINDING PROTEIN 1"/>
    <property type="match status" value="1"/>
</dbReference>
<dbReference type="PANTHER" id="PTHR19424:SF4">
    <property type="entry name" value="HEAT SHOCK FACTOR-BINDING PROTEIN 1-LIKE PROTEIN 1"/>
    <property type="match status" value="1"/>
</dbReference>
<dbReference type="Pfam" id="PF06825">
    <property type="entry name" value="HSBP1"/>
    <property type="match status" value="1"/>
</dbReference>
<keyword id="KW-0175">Coiled coil</keyword>
<keyword id="KW-1185">Reference proteome</keyword>
<evidence type="ECO:0000255" key="1"/>
<evidence type="ECO:0000305" key="2"/>
<protein>
    <recommendedName>
        <fullName>Heat shock factor-binding protein 1-like protein 1</fullName>
    </recommendedName>
</protein>